<sequence>MSRFLVRLSTVVSKGATGKSVLPQKRIFAGIRLISSSTGLQSLTRYDQSTDWQRKLSPEQYVVTREKGTEVPFSGIYLNHNEVGMYHCVCCDSPLFSSEAKYDAGAGWPSFCEAHGTWEKDESHANIVRRPDNSLGSTGTEVICKHCDAHLGHVFEDGPDPTGQRFCINSVALNFKPREK</sequence>
<comment type="function">
    <text evidence="3">Methionine-sulfoxide reductase that specifically reduces methionine (R)-sulfoxide back to methionine. While in many cases, methionine oxidation is the result of random oxidation following oxidative stress, methionine oxidation is also a post-translational modification that takes place on specific residue. Upon oxidative stress, may play a role in the preservation of mitochondrial integrity by decreasing the intracellular reactive oxygen species build-up through its scavenging role, hence contributing to cell survival and protein maintenance.</text>
</comment>
<comment type="catalytic activity">
    <reaction evidence="2">
        <text>L-methionyl-[protein] + [thioredoxin]-disulfide + H2O = L-methionyl-(R)-S-oxide-[protein] + [thioredoxin]-dithiol</text>
        <dbReference type="Rhea" id="RHEA:24164"/>
        <dbReference type="Rhea" id="RHEA-COMP:10698"/>
        <dbReference type="Rhea" id="RHEA-COMP:10700"/>
        <dbReference type="Rhea" id="RHEA-COMP:12313"/>
        <dbReference type="Rhea" id="RHEA-COMP:12314"/>
        <dbReference type="ChEBI" id="CHEBI:15377"/>
        <dbReference type="ChEBI" id="CHEBI:16044"/>
        <dbReference type="ChEBI" id="CHEBI:29950"/>
        <dbReference type="ChEBI" id="CHEBI:45764"/>
        <dbReference type="ChEBI" id="CHEBI:50058"/>
        <dbReference type="EC" id="1.8.4.12"/>
    </reaction>
</comment>
<comment type="catalytic activity">
    <reaction evidence="2">
        <text>[thioredoxin]-disulfide + L-methionine + H2O = L-methionine (R)-S-oxide + [thioredoxin]-dithiol</text>
        <dbReference type="Rhea" id="RHEA:21260"/>
        <dbReference type="Rhea" id="RHEA-COMP:10698"/>
        <dbReference type="Rhea" id="RHEA-COMP:10700"/>
        <dbReference type="ChEBI" id="CHEBI:15377"/>
        <dbReference type="ChEBI" id="CHEBI:29950"/>
        <dbReference type="ChEBI" id="CHEBI:50058"/>
        <dbReference type="ChEBI" id="CHEBI:57844"/>
        <dbReference type="ChEBI" id="CHEBI:58773"/>
        <dbReference type="EC" id="1.8.4.14"/>
    </reaction>
</comment>
<comment type="cofactor">
    <cofactor evidence="1">
        <name>Zn(2+)</name>
        <dbReference type="ChEBI" id="CHEBI:29105"/>
    </cofactor>
    <text evidence="1">Binds 1 zinc ion per subunit.</text>
</comment>
<comment type="subcellular location">
    <subcellularLocation>
        <location evidence="1">Mitochondrion</location>
    </subcellularLocation>
</comment>
<comment type="similarity">
    <text evidence="6">Belongs to the MsrB Met sulfoxide reductase family.</text>
</comment>
<keyword id="KW-0479">Metal-binding</keyword>
<keyword id="KW-0496">Mitochondrion</keyword>
<keyword id="KW-0560">Oxidoreductase</keyword>
<keyword id="KW-1185">Reference proteome</keyword>
<keyword id="KW-0809">Transit peptide</keyword>
<keyword id="KW-0862">Zinc</keyword>
<accession>Q6NW52</accession>
<evidence type="ECO:0000250" key="1"/>
<evidence type="ECO:0000250" key="2">
    <source>
        <dbReference type="UniProtKB" id="Q9JLC3"/>
    </source>
</evidence>
<evidence type="ECO:0000250" key="3">
    <source>
        <dbReference type="UniProtKB" id="Q9Y3D2"/>
    </source>
</evidence>
<evidence type="ECO:0000255" key="4"/>
<evidence type="ECO:0000255" key="5">
    <source>
        <dbReference type="PROSITE-ProRule" id="PRU01126"/>
    </source>
</evidence>
<evidence type="ECO:0000305" key="6"/>
<gene>
    <name type="primary">msrb2</name>
    <name type="ORF">zgc:85965</name>
</gene>
<feature type="transit peptide" description="Mitochondrion" evidence="4">
    <location>
        <begin position="1"/>
        <end position="41"/>
    </location>
</feature>
<feature type="chain" id="PRO_0000327245" description="Methionine-R-sulfoxide reductase B2, mitochondrial">
    <location>
        <begin position="42"/>
        <end position="180"/>
    </location>
</feature>
<feature type="domain" description="MsrB" evidence="5">
    <location>
        <begin position="49"/>
        <end position="178"/>
    </location>
</feature>
<feature type="active site" description="Nucleophile" evidence="5">
    <location>
        <position position="167"/>
    </location>
</feature>
<feature type="binding site" evidence="5">
    <location>
        <position position="88"/>
    </location>
    <ligand>
        <name>Zn(2+)</name>
        <dbReference type="ChEBI" id="CHEBI:29105"/>
    </ligand>
</feature>
<feature type="binding site" evidence="5">
    <location>
        <position position="91"/>
    </location>
    <ligand>
        <name>Zn(2+)</name>
        <dbReference type="ChEBI" id="CHEBI:29105"/>
    </ligand>
</feature>
<feature type="binding site" evidence="5">
    <location>
        <position position="144"/>
    </location>
    <ligand>
        <name>Zn(2+)</name>
        <dbReference type="ChEBI" id="CHEBI:29105"/>
    </ligand>
</feature>
<feature type="binding site" evidence="5">
    <location>
        <position position="147"/>
    </location>
    <ligand>
        <name>Zn(2+)</name>
        <dbReference type="ChEBI" id="CHEBI:29105"/>
    </ligand>
</feature>
<proteinExistence type="evidence at transcript level"/>
<name>MSRB2_DANRE</name>
<protein>
    <recommendedName>
        <fullName>Methionine-R-sulfoxide reductase B2, mitochondrial</fullName>
        <shortName>MsrB2</shortName>
        <ecNumber evidence="2">1.8.4.12</ecNumber>
        <ecNumber evidence="2">1.8.4.14</ecNumber>
    </recommendedName>
</protein>
<reference key="1">
    <citation type="submission" date="2004-03" db="EMBL/GenBank/DDBJ databases">
        <authorList>
            <consortium name="NIH - Zebrafish Gene Collection (ZGC) project"/>
        </authorList>
    </citation>
    <scope>NUCLEOTIDE SEQUENCE [LARGE SCALE MRNA]</scope>
    <source>
        <tissue>Embryo</tissue>
    </source>
</reference>
<dbReference type="EC" id="1.8.4.12" evidence="2"/>
<dbReference type="EC" id="1.8.4.14" evidence="2"/>
<dbReference type="EMBL" id="BC067722">
    <property type="protein sequence ID" value="AAH67722.1"/>
    <property type="molecule type" value="mRNA"/>
</dbReference>
<dbReference type="SMR" id="Q6NW52"/>
<dbReference type="FunCoup" id="Q6NW52">
    <property type="interactions" value="14"/>
</dbReference>
<dbReference type="STRING" id="7955.ENSDARP00000012146"/>
<dbReference type="PaxDb" id="7955-ENSDARP00000012146"/>
<dbReference type="AGR" id="ZFIN:ZDB-GENE-040426-2304"/>
<dbReference type="ZFIN" id="ZDB-GENE-040426-2304">
    <property type="gene designation" value="msrb2"/>
</dbReference>
<dbReference type="eggNOG" id="KOG0856">
    <property type="taxonomic scope" value="Eukaryota"/>
</dbReference>
<dbReference type="InParanoid" id="Q6NW52"/>
<dbReference type="PhylomeDB" id="Q6NW52"/>
<dbReference type="Reactome" id="R-DRE-5676934">
    <property type="pathway name" value="Protein repair"/>
</dbReference>
<dbReference type="PRO" id="PR:Q6NW52"/>
<dbReference type="Proteomes" id="UP000000437">
    <property type="component" value="Unplaced"/>
</dbReference>
<dbReference type="GO" id="GO:0005737">
    <property type="term" value="C:cytoplasm"/>
    <property type="evidence" value="ECO:0000318"/>
    <property type="project" value="GO_Central"/>
</dbReference>
<dbReference type="GO" id="GO:0005739">
    <property type="term" value="C:mitochondrion"/>
    <property type="evidence" value="ECO:0007669"/>
    <property type="project" value="UniProtKB-SubCell"/>
</dbReference>
<dbReference type="GO" id="GO:0003779">
    <property type="term" value="F:actin binding"/>
    <property type="evidence" value="ECO:0000250"/>
    <property type="project" value="UniProtKB"/>
</dbReference>
<dbReference type="GO" id="GO:0033745">
    <property type="term" value="F:L-methionine-(R)-S-oxide reductase activity"/>
    <property type="evidence" value="ECO:0007669"/>
    <property type="project" value="UniProtKB-EC"/>
</dbReference>
<dbReference type="GO" id="GO:0046872">
    <property type="term" value="F:metal ion binding"/>
    <property type="evidence" value="ECO:0007669"/>
    <property type="project" value="UniProtKB-KW"/>
</dbReference>
<dbReference type="GO" id="GO:0033743">
    <property type="term" value="F:peptide-methionine (R)-S-oxide reductase activity"/>
    <property type="evidence" value="ECO:0000250"/>
    <property type="project" value="UniProtKB"/>
</dbReference>
<dbReference type="GO" id="GO:0030041">
    <property type="term" value="P:actin filament polymerization"/>
    <property type="evidence" value="ECO:0000250"/>
    <property type="project" value="UniProtKB"/>
</dbReference>
<dbReference type="GO" id="GO:0030091">
    <property type="term" value="P:protein repair"/>
    <property type="evidence" value="ECO:0007669"/>
    <property type="project" value="InterPro"/>
</dbReference>
<dbReference type="GO" id="GO:0006979">
    <property type="term" value="P:response to oxidative stress"/>
    <property type="evidence" value="ECO:0007669"/>
    <property type="project" value="InterPro"/>
</dbReference>
<dbReference type="FunFam" id="2.170.150.20:FF:000006">
    <property type="entry name" value="Peptide-methionine (R)-S-oxide reductase"/>
    <property type="match status" value="1"/>
</dbReference>
<dbReference type="Gene3D" id="2.170.150.20">
    <property type="entry name" value="Peptide methionine sulfoxide reductase"/>
    <property type="match status" value="1"/>
</dbReference>
<dbReference type="InterPro" id="IPR028427">
    <property type="entry name" value="Met_Sox_Rdtase_MsrB"/>
</dbReference>
<dbReference type="InterPro" id="IPR002579">
    <property type="entry name" value="Met_Sox_Rdtase_MsrB_dom"/>
</dbReference>
<dbReference type="InterPro" id="IPR011057">
    <property type="entry name" value="Mss4-like_sf"/>
</dbReference>
<dbReference type="NCBIfam" id="TIGR00357">
    <property type="entry name" value="peptide-methionine (R)-S-oxide reductase MsrB"/>
    <property type="match status" value="1"/>
</dbReference>
<dbReference type="PANTHER" id="PTHR10173">
    <property type="entry name" value="METHIONINE SULFOXIDE REDUCTASE"/>
    <property type="match status" value="1"/>
</dbReference>
<dbReference type="PANTHER" id="PTHR10173:SF37">
    <property type="entry name" value="METHIONINE-R-SULFOXIDE REDUCTASE B2, MITOCHONDRIAL"/>
    <property type="match status" value="1"/>
</dbReference>
<dbReference type="Pfam" id="PF01641">
    <property type="entry name" value="SelR"/>
    <property type="match status" value="1"/>
</dbReference>
<dbReference type="SUPFAM" id="SSF51316">
    <property type="entry name" value="Mss4-like"/>
    <property type="match status" value="1"/>
</dbReference>
<dbReference type="PROSITE" id="PS51790">
    <property type="entry name" value="MSRB"/>
    <property type="match status" value="1"/>
</dbReference>
<organism>
    <name type="scientific">Danio rerio</name>
    <name type="common">Zebrafish</name>
    <name type="synonym">Brachydanio rerio</name>
    <dbReference type="NCBI Taxonomy" id="7955"/>
    <lineage>
        <taxon>Eukaryota</taxon>
        <taxon>Metazoa</taxon>
        <taxon>Chordata</taxon>
        <taxon>Craniata</taxon>
        <taxon>Vertebrata</taxon>
        <taxon>Euteleostomi</taxon>
        <taxon>Actinopterygii</taxon>
        <taxon>Neopterygii</taxon>
        <taxon>Teleostei</taxon>
        <taxon>Ostariophysi</taxon>
        <taxon>Cypriniformes</taxon>
        <taxon>Danionidae</taxon>
        <taxon>Danioninae</taxon>
        <taxon>Danio</taxon>
    </lineage>
</organism>